<comment type="function">
    <text evidence="1">Binds to 23S rRNA. Forms part of two intersubunit bridges in the 70S ribosome.</text>
</comment>
<comment type="subunit">
    <text evidence="1">Part of the 50S ribosomal subunit. Forms a cluster with proteins L3 and L24e, part of which may contact the 16S rRNA in 2 intersubunit bridges.</text>
</comment>
<comment type="similarity">
    <text evidence="1">Belongs to the universal ribosomal protein uL14 family.</text>
</comment>
<accession>Q8TW20</accession>
<dbReference type="EMBL" id="AE009439">
    <property type="protein sequence ID" value="AAM02431.1"/>
    <property type="molecule type" value="Genomic_DNA"/>
</dbReference>
<dbReference type="RefSeq" id="WP_011019586.1">
    <property type="nucleotide sequence ID" value="NC_003551.1"/>
</dbReference>
<dbReference type="SMR" id="Q8TW20"/>
<dbReference type="FunCoup" id="Q8TW20">
    <property type="interactions" value="198"/>
</dbReference>
<dbReference type="STRING" id="190192.MK1218"/>
<dbReference type="PaxDb" id="190192-MK1218"/>
<dbReference type="EnsemblBacteria" id="AAM02431">
    <property type="protein sequence ID" value="AAM02431"/>
    <property type="gene ID" value="MK1218"/>
</dbReference>
<dbReference type="GeneID" id="1477813"/>
<dbReference type="KEGG" id="mka:MK1218"/>
<dbReference type="PATRIC" id="fig|190192.8.peg.1321"/>
<dbReference type="HOGENOM" id="CLU_095071_3_0_2"/>
<dbReference type="InParanoid" id="Q8TW20"/>
<dbReference type="OrthoDB" id="23569at2157"/>
<dbReference type="Proteomes" id="UP000001826">
    <property type="component" value="Chromosome"/>
</dbReference>
<dbReference type="GO" id="GO:0022625">
    <property type="term" value="C:cytosolic large ribosomal subunit"/>
    <property type="evidence" value="ECO:0007669"/>
    <property type="project" value="TreeGrafter"/>
</dbReference>
<dbReference type="GO" id="GO:0070180">
    <property type="term" value="F:large ribosomal subunit rRNA binding"/>
    <property type="evidence" value="ECO:0007669"/>
    <property type="project" value="TreeGrafter"/>
</dbReference>
<dbReference type="GO" id="GO:0003735">
    <property type="term" value="F:structural constituent of ribosome"/>
    <property type="evidence" value="ECO:0007669"/>
    <property type="project" value="InterPro"/>
</dbReference>
<dbReference type="GO" id="GO:0006412">
    <property type="term" value="P:translation"/>
    <property type="evidence" value="ECO:0007669"/>
    <property type="project" value="UniProtKB-UniRule"/>
</dbReference>
<dbReference type="CDD" id="cd00337">
    <property type="entry name" value="Ribosomal_uL14"/>
    <property type="match status" value="1"/>
</dbReference>
<dbReference type="FunFam" id="2.40.150.20:FF:000007">
    <property type="entry name" value="50S ribosomal protein L14"/>
    <property type="match status" value="1"/>
</dbReference>
<dbReference type="Gene3D" id="2.40.150.20">
    <property type="entry name" value="Ribosomal protein L14"/>
    <property type="match status" value="1"/>
</dbReference>
<dbReference type="HAMAP" id="MF_01367">
    <property type="entry name" value="Ribosomal_uL14"/>
    <property type="match status" value="1"/>
</dbReference>
<dbReference type="InterPro" id="IPR000218">
    <property type="entry name" value="Ribosomal_uL14"/>
</dbReference>
<dbReference type="InterPro" id="IPR019971">
    <property type="entry name" value="Ribosomal_uL14_arc"/>
</dbReference>
<dbReference type="InterPro" id="IPR019972">
    <property type="entry name" value="Ribosomal_uL14_CS"/>
</dbReference>
<dbReference type="InterPro" id="IPR036853">
    <property type="entry name" value="Ribosomal_uL14_sf"/>
</dbReference>
<dbReference type="NCBIfam" id="NF006344">
    <property type="entry name" value="PRK08571.1"/>
    <property type="match status" value="1"/>
</dbReference>
<dbReference type="NCBIfam" id="TIGR03673">
    <property type="entry name" value="uL14_arch"/>
    <property type="match status" value="1"/>
</dbReference>
<dbReference type="PANTHER" id="PTHR11761">
    <property type="entry name" value="50S/60S RIBOSOMAL PROTEIN L14/L23"/>
    <property type="match status" value="1"/>
</dbReference>
<dbReference type="PANTHER" id="PTHR11761:SF8">
    <property type="entry name" value="LARGE RIBOSOMAL SUBUNIT PROTEIN UL14"/>
    <property type="match status" value="1"/>
</dbReference>
<dbReference type="Pfam" id="PF00238">
    <property type="entry name" value="Ribosomal_L14"/>
    <property type="match status" value="1"/>
</dbReference>
<dbReference type="SMART" id="SM01374">
    <property type="entry name" value="Ribosomal_L14"/>
    <property type="match status" value="1"/>
</dbReference>
<dbReference type="SUPFAM" id="SSF50193">
    <property type="entry name" value="Ribosomal protein L14"/>
    <property type="match status" value="1"/>
</dbReference>
<dbReference type="PROSITE" id="PS00049">
    <property type="entry name" value="RIBOSOMAL_L14"/>
    <property type="match status" value="1"/>
</dbReference>
<organism>
    <name type="scientific">Methanopyrus kandleri (strain AV19 / DSM 6324 / JCM 9639 / NBRC 100938)</name>
    <dbReference type="NCBI Taxonomy" id="190192"/>
    <lineage>
        <taxon>Archaea</taxon>
        <taxon>Methanobacteriati</taxon>
        <taxon>Methanobacteriota</taxon>
        <taxon>Methanomada group</taxon>
        <taxon>Methanopyri</taxon>
        <taxon>Methanopyrales</taxon>
        <taxon>Methanopyraceae</taxon>
        <taxon>Methanopyrus</taxon>
    </lineage>
</organism>
<gene>
    <name evidence="1" type="primary">rpl14</name>
    <name type="ordered locus">MK1218</name>
</gene>
<protein>
    <recommendedName>
        <fullName evidence="1">Large ribosomal subunit protein uL14</fullName>
    </recommendedName>
    <alternativeName>
        <fullName evidence="2">50S ribosomal protein L14</fullName>
    </alternativeName>
</protein>
<evidence type="ECO:0000255" key="1">
    <source>
        <dbReference type="HAMAP-Rule" id="MF_01367"/>
    </source>
</evidence>
<evidence type="ECO:0000305" key="2"/>
<reference key="1">
    <citation type="journal article" date="2002" name="Proc. Natl. Acad. Sci. U.S.A.">
        <title>The complete genome of hyperthermophile Methanopyrus kandleri AV19 and monophyly of archaeal methanogens.</title>
        <authorList>
            <person name="Slesarev A.I."/>
            <person name="Mezhevaya K.V."/>
            <person name="Makarova K.S."/>
            <person name="Polushin N.N."/>
            <person name="Shcherbinina O.V."/>
            <person name="Shakhova V.V."/>
            <person name="Belova G.I."/>
            <person name="Aravind L."/>
            <person name="Natale D.A."/>
            <person name="Rogozin I.B."/>
            <person name="Tatusov R.L."/>
            <person name="Wolf Y.I."/>
            <person name="Stetter K.O."/>
            <person name="Malykh A.G."/>
            <person name="Koonin E.V."/>
            <person name="Kozyavkin S.A."/>
        </authorList>
    </citation>
    <scope>NUCLEOTIDE SEQUENCE [LARGE SCALE GENOMIC DNA]</scope>
    <source>
        <strain>AV19 / DSM 6324 / JCM 9639 / NBRC 100938</strain>
    </source>
</reference>
<name>RL14_METKA</name>
<feature type="chain" id="PRO_0000266602" description="Large ribosomal subunit protein uL14">
    <location>
        <begin position="1"/>
        <end position="133"/>
    </location>
</feature>
<proteinExistence type="inferred from homology"/>
<sequence length="133" mass="14366">MKAIKAKSPHAALPVGARLVCADNTGARELQIIAVKGYKGVRRRLPNAGIGDMVVCSVKEGTPDMRKEVVNAVIVRQRKEYRRPDGTRVKFEDNAAVIVTPDGAPRGSEIRGPVAKEAAERWPRIGSIASIIV</sequence>
<keyword id="KW-1185">Reference proteome</keyword>
<keyword id="KW-0687">Ribonucleoprotein</keyword>
<keyword id="KW-0689">Ribosomal protein</keyword>
<keyword id="KW-0694">RNA-binding</keyword>
<keyword id="KW-0699">rRNA-binding</keyword>